<proteinExistence type="evidence at transcript level"/>
<protein>
    <recommendedName>
        <fullName>Mercuric reductase</fullName>
        <ecNumber evidence="1">1.16.1.1</ecNumber>
    </recommendedName>
    <alternativeName>
        <fullName>Hg(II) reductase</fullName>
    </alternativeName>
</protein>
<feature type="chain" id="PRO_0000068004" description="Mercuric reductase">
    <location>
        <begin position="1"/>
        <end position="474"/>
    </location>
</feature>
<feature type="binding site" evidence="1">
    <location>
        <position position="19"/>
    </location>
    <ligand>
        <name>FAD</name>
        <dbReference type="ChEBI" id="CHEBI:57692"/>
    </ligand>
</feature>
<feature type="binding site" evidence="1">
    <location>
        <position position="39"/>
    </location>
    <ligand>
        <name>FAD</name>
        <dbReference type="ChEBI" id="CHEBI:57692"/>
    </ligand>
</feature>
<feature type="binding site" evidence="1">
    <location>
        <position position="44"/>
    </location>
    <ligand>
        <name>FAD</name>
        <dbReference type="ChEBI" id="CHEBI:57692"/>
    </ligand>
</feature>
<feature type="binding site" evidence="1">
    <location>
        <position position="54"/>
    </location>
    <ligand>
        <name>FAD</name>
        <dbReference type="ChEBI" id="CHEBI:57692"/>
    </ligand>
</feature>
<feature type="binding site" evidence="1">
    <location>
        <position position="119"/>
    </location>
    <ligand>
        <name>FAD</name>
        <dbReference type="ChEBI" id="CHEBI:57692"/>
    </ligand>
</feature>
<feature type="binding site" evidence="1">
    <location>
        <position position="315"/>
    </location>
    <ligand>
        <name>FAD</name>
        <dbReference type="ChEBI" id="CHEBI:57692"/>
    </ligand>
</feature>
<feature type="binding site" evidence="1">
    <location>
        <position position="323"/>
    </location>
    <ligand>
        <name>FAD</name>
        <dbReference type="ChEBI" id="CHEBI:57692"/>
    </ligand>
</feature>
<feature type="binding site" evidence="1">
    <location>
        <position position="471"/>
    </location>
    <ligand>
        <name>Hg(2+)</name>
        <dbReference type="ChEBI" id="CHEBI:16793"/>
    </ligand>
</feature>
<feature type="binding site" evidence="1">
    <location>
        <position position="472"/>
    </location>
    <ligand>
        <name>Hg(2+)</name>
        <dbReference type="ChEBI" id="CHEBI:16793"/>
    </ligand>
</feature>
<feature type="disulfide bond" description="Redox-active" evidence="1">
    <location>
        <begin position="45"/>
        <end position="50"/>
    </location>
</feature>
<reference key="1">
    <citation type="journal article" date="1992" name="Mol. Gen. Genet.">
        <title>Cloning and DNA sequence analysis of the mercury resistance genes of Streptomyces lividans.</title>
        <authorList>
            <person name="Sedlmeier R."/>
            <person name="Altenbuchner J."/>
        </authorList>
    </citation>
    <scope>NUCLEOTIDE SEQUENCE [GENOMIC DNA]</scope>
    <source>
        <strain>66 / 1326</strain>
    </source>
</reference>
<reference key="2">
    <citation type="journal article" date="1996" name="Mol. Gen. Genet.">
        <title>Regulation of the operon responsible for broad-spectrum mercury resistance in Streptomyces lividans 1326.</title>
        <authorList>
            <person name="Brunker P."/>
            <person name="Rother D."/>
            <person name="Sedlmeier R."/>
            <person name="Klein J."/>
            <person name="Mattes R."/>
            <person name="Altenbuchner J."/>
        </authorList>
    </citation>
    <scope>INDUCTION BY MERCURY</scope>
    <source>
        <strain>66 / 1326</strain>
    </source>
</reference>
<organism>
    <name type="scientific">Streptomyces lividans</name>
    <dbReference type="NCBI Taxonomy" id="1916"/>
    <lineage>
        <taxon>Bacteria</taxon>
        <taxon>Bacillati</taxon>
        <taxon>Actinomycetota</taxon>
        <taxon>Actinomycetes</taxon>
        <taxon>Kitasatosporales</taxon>
        <taxon>Streptomycetaceae</taxon>
        <taxon>Streptomyces</taxon>
    </lineage>
</organism>
<comment type="function">
    <text evidence="1">Resistance to Hg(2+) in bacteria appears to be governed by a specialized system which includes mercuric reductase. MerA protein is responsible for volatilizing mercury as Hg(0).</text>
</comment>
<comment type="catalytic activity">
    <reaction evidence="1">
        <text>Hg + NADP(+) + H(+) = Hg(2+) + NADPH</text>
        <dbReference type="Rhea" id="RHEA:23856"/>
        <dbReference type="ChEBI" id="CHEBI:15378"/>
        <dbReference type="ChEBI" id="CHEBI:16170"/>
        <dbReference type="ChEBI" id="CHEBI:16793"/>
        <dbReference type="ChEBI" id="CHEBI:57783"/>
        <dbReference type="ChEBI" id="CHEBI:58349"/>
        <dbReference type="EC" id="1.16.1.1"/>
    </reaction>
</comment>
<comment type="cofactor">
    <cofactor evidence="1">
        <name>FAD</name>
        <dbReference type="ChEBI" id="CHEBI:57692"/>
    </cofactor>
    <text evidence="1">Binds 1 FAD per subunit.</text>
</comment>
<comment type="subunit">
    <text evidence="1">Homodimer.</text>
</comment>
<comment type="induction">
    <text evidence="2">By mercuric ions (PubMed:8676873). Negatively regulated by MerR (PubMed:8676873).</text>
</comment>
<comment type="miscellaneous">
    <text evidence="1">The active site is a redox-active disulfide bond.</text>
</comment>
<comment type="similarity">
    <text evidence="3">Belongs to the class-I pyridine nucleotide-disulfide oxidoreductase family.</text>
</comment>
<gene>
    <name type="primary">merA</name>
</gene>
<accession>P30341</accession>
<sequence>MLQAHTGYDLAIIGSGAGAFAAAIAARNKGRSVVMVERGTTGGTCVNVGCVPSKALLAAAEARHGAQAASRFPGIQATEPALDFPALISGKDTLVGQLRAEKYTDLAAEYGWQIVHGTATFADGPMLEVALNDGGTATVEAAHYLIATGSAPTAPHIDGLDQVDYLTSTTAMELQQLPEHLLILGGGYVGLEQAQLFARLGSRVTLAVRSRLASREEPEISAGIENIFREEGITVHTRTQLRAVRRDGEGILATLTGPDGDQQVRASHLLIATGRRSVTNGLGLERVGVKTGERGEVVVDEYLRTDNPRIWAAGDVTCHPDFVYVAAAHGTLVADNALDGAERTLDYTALPKVTFTSPAIASVGLTEAQLTEAGIAHQTRTLSLENVPRALVNRDTRGLVKLIAERGTGKLLAAHVLAEGAGDVITAATYAITAGLTVDQLARTWHPYLTMAEALKLAAQTFTSDVAKLSCCAG</sequence>
<evidence type="ECO:0000250" key="1">
    <source>
        <dbReference type="UniProtKB" id="P00392"/>
    </source>
</evidence>
<evidence type="ECO:0000269" key="2">
    <source>
    </source>
</evidence>
<evidence type="ECO:0000305" key="3"/>
<keyword id="KW-1015">Disulfide bond</keyword>
<keyword id="KW-0274">FAD</keyword>
<keyword id="KW-0285">Flavoprotein</keyword>
<keyword id="KW-0475">Mercuric resistance</keyword>
<keyword id="KW-0476">Mercury</keyword>
<keyword id="KW-0479">Metal-binding</keyword>
<keyword id="KW-0521">NADP</keyword>
<keyword id="KW-0560">Oxidoreductase</keyword>
<keyword id="KW-0676">Redox-active center</keyword>
<dbReference type="EC" id="1.16.1.1" evidence="1"/>
<dbReference type="EMBL" id="X65467">
    <property type="protein sequence ID" value="CAA46460.1"/>
    <property type="molecule type" value="Genomic_DNA"/>
</dbReference>
<dbReference type="PIR" id="S30168">
    <property type="entry name" value="S30168"/>
</dbReference>
<dbReference type="SMR" id="P30341"/>
<dbReference type="GO" id="GO:0050660">
    <property type="term" value="F:flavin adenine dinucleotide binding"/>
    <property type="evidence" value="ECO:0007669"/>
    <property type="project" value="InterPro"/>
</dbReference>
<dbReference type="GO" id="GO:0016152">
    <property type="term" value="F:mercury (II) reductase (NADP+) activity"/>
    <property type="evidence" value="ECO:0007669"/>
    <property type="project" value="UniProtKB-EC"/>
</dbReference>
<dbReference type="GO" id="GO:0045340">
    <property type="term" value="F:mercury ion binding"/>
    <property type="evidence" value="ECO:0007669"/>
    <property type="project" value="InterPro"/>
</dbReference>
<dbReference type="GO" id="GO:0003955">
    <property type="term" value="F:NAD(P)H dehydrogenase (quinone) activity"/>
    <property type="evidence" value="ECO:0007669"/>
    <property type="project" value="TreeGrafter"/>
</dbReference>
<dbReference type="GO" id="GO:0050661">
    <property type="term" value="F:NADP binding"/>
    <property type="evidence" value="ECO:0007669"/>
    <property type="project" value="InterPro"/>
</dbReference>
<dbReference type="GO" id="GO:0016668">
    <property type="term" value="F:oxidoreductase activity, acting on a sulfur group of donors, NAD(P) as acceptor"/>
    <property type="evidence" value="ECO:0007669"/>
    <property type="project" value="InterPro"/>
</dbReference>
<dbReference type="GO" id="GO:0050787">
    <property type="term" value="P:detoxification of mercury ion"/>
    <property type="evidence" value="ECO:0007669"/>
    <property type="project" value="InterPro"/>
</dbReference>
<dbReference type="FunFam" id="3.30.390.30:FF:000001">
    <property type="entry name" value="Dihydrolipoyl dehydrogenase"/>
    <property type="match status" value="1"/>
</dbReference>
<dbReference type="Gene3D" id="3.30.390.30">
    <property type="match status" value="1"/>
</dbReference>
<dbReference type="Gene3D" id="3.50.50.60">
    <property type="entry name" value="FAD/NAD(P)-binding domain"/>
    <property type="match status" value="2"/>
</dbReference>
<dbReference type="InterPro" id="IPR036188">
    <property type="entry name" value="FAD/NAD-bd_sf"/>
</dbReference>
<dbReference type="InterPro" id="IPR023753">
    <property type="entry name" value="FAD/NAD-binding_dom"/>
</dbReference>
<dbReference type="InterPro" id="IPR016156">
    <property type="entry name" value="FAD/NAD-linked_Rdtase_dimer_sf"/>
</dbReference>
<dbReference type="InterPro" id="IPR021179">
    <property type="entry name" value="Mercury_reductase_MerA"/>
</dbReference>
<dbReference type="InterPro" id="IPR001100">
    <property type="entry name" value="Pyr_nuc-diS_OxRdtase"/>
</dbReference>
<dbReference type="InterPro" id="IPR004099">
    <property type="entry name" value="Pyr_nucl-diS_OxRdtase_dimer"/>
</dbReference>
<dbReference type="InterPro" id="IPR012999">
    <property type="entry name" value="Pyr_OxRdtase_I_AS"/>
</dbReference>
<dbReference type="NCBIfam" id="TIGR02053">
    <property type="entry name" value="MerA"/>
    <property type="match status" value="1"/>
</dbReference>
<dbReference type="PANTHER" id="PTHR43014">
    <property type="entry name" value="MERCURIC REDUCTASE"/>
    <property type="match status" value="1"/>
</dbReference>
<dbReference type="PANTHER" id="PTHR43014:SF4">
    <property type="entry name" value="PYRIDINE NUCLEOTIDE-DISULFIDE OXIDOREDUCTASE RCLA-RELATED"/>
    <property type="match status" value="1"/>
</dbReference>
<dbReference type="Pfam" id="PF07992">
    <property type="entry name" value="Pyr_redox_2"/>
    <property type="match status" value="1"/>
</dbReference>
<dbReference type="Pfam" id="PF02852">
    <property type="entry name" value="Pyr_redox_dim"/>
    <property type="match status" value="1"/>
</dbReference>
<dbReference type="PIRSF" id="PIRSF000350">
    <property type="entry name" value="Mercury_reductase_MerA"/>
    <property type="match status" value="1"/>
</dbReference>
<dbReference type="PRINTS" id="PR00368">
    <property type="entry name" value="FADPNR"/>
</dbReference>
<dbReference type="PRINTS" id="PR00411">
    <property type="entry name" value="PNDRDTASEI"/>
</dbReference>
<dbReference type="SUPFAM" id="SSF51905">
    <property type="entry name" value="FAD/NAD(P)-binding domain"/>
    <property type="match status" value="1"/>
</dbReference>
<dbReference type="SUPFAM" id="SSF55424">
    <property type="entry name" value="FAD/NAD-linked reductases, dimerisation (C-terminal) domain"/>
    <property type="match status" value="1"/>
</dbReference>
<dbReference type="PROSITE" id="PS00076">
    <property type="entry name" value="PYRIDINE_REDOX_1"/>
    <property type="match status" value="1"/>
</dbReference>
<name>MERA_STRLI</name>